<proteinExistence type="inferred from homology"/>
<organism>
    <name type="scientific">Neisseria meningitidis serogroup A / serotype 4A (strain DSM 15465 / Z2491)</name>
    <dbReference type="NCBI Taxonomy" id="122587"/>
    <lineage>
        <taxon>Bacteria</taxon>
        <taxon>Pseudomonadati</taxon>
        <taxon>Pseudomonadota</taxon>
        <taxon>Betaproteobacteria</taxon>
        <taxon>Neisseriales</taxon>
        <taxon>Neisseriaceae</taxon>
        <taxon>Neisseria</taxon>
    </lineage>
</organism>
<dbReference type="EMBL" id="AL157959">
    <property type="protein sequence ID" value="CAM08663.1"/>
    <property type="molecule type" value="Genomic_DNA"/>
</dbReference>
<dbReference type="PIR" id="H81099">
    <property type="entry name" value="H81099"/>
</dbReference>
<dbReference type="RefSeq" id="WP_002213349.1">
    <property type="nucleotide sequence ID" value="NC_003116.1"/>
</dbReference>
<dbReference type="SMR" id="P0A0U1"/>
<dbReference type="EnsemblBacteria" id="CAM08663">
    <property type="protein sequence ID" value="CAM08663"/>
    <property type="gene ID" value="NMA1516"/>
</dbReference>
<dbReference type="KEGG" id="nma:NMA1516"/>
<dbReference type="HOGENOM" id="CLU_105066_2_0_4"/>
<dbReference type="Proteomes" id="UP000000626">
    <property type="component" value="Chromosome"/>
</dbReference>
<dbReference type="GO" id="GO:0005694">
    <property type="term" value="C:chromosome"/>
    <property type="evidence" value="ECO:0007669"/>
    <property type="project" value="InterPro"/>
</dbReference>
<dbReference type="GO" id="GO:0005829">
    <property type="term" value="C:cytosol"/>
    <property type="evidence" value="ECO:0007669"/>
    <property type="project" value="TreeGrafter"/>
</dbReference>
<dbReference type="GO" id="GO:0003677">
    <property type="term" value="F:DNA binding"/>
    <property type="evidence" value="ECO:0007669"/>
    <property type="project" value="UniProtKB-UniRule"/>
</dbReference>
<dbReference type="GO" id="GO:0030527">
    <property type="term" value="F:structural constituent of chromatin"/>
    <property type="evidence" value="ECO:0007669"/>
    <property type="project" value="InterPro"/>
</dbReference>
<dbReference type="GO" id="GO:0006310">
    <property type="term" value="P:DNA recombination"/>
    <property type="evidence" value="ECO:0007669"/>
    <property type="project" value="UniProtKB-UniRule"/>
</dbReference>
<dbReference type="GO" id="GO:0006355">
    <property type="term" value="P:regulation of DNA-templated transcription"/>
    <property type="evidence" value="ECO:0007669"/>
    <property type="project" value="UniProtKB-UniRule"/>
</dbReference>
<dbReference type="GO" id="GO:0006417">
    <property type="term" value="P:regulation of translation"/>
    <property type="evidence" value="ECO:0007669"/>
    <property type="project" value="UniProtKB-UniRule"/>
</dbReference>
<dbReference type="CDD" id="cd13836">
    <property type="entry name" value="IHF_B"/>
    <property type="match status" value="1"/>
</dbReference>
<dbReference type="FunFam" id="4.10.520.10:FF:000003">
    <property type="entry name" value="Integration host factor subunit beta"/>
    <property type="match status" value="1"/>
</dbReference>
<dbReference type="Gene3D" id="4.10.520.10">
    <property type="entry name" value="IHF-like DNA-binding proteins"/>
    <property type="match status" value="1"/>
</dbReference>
<dbReference type="HAMAP" id="MF_00381">
    <property type="entry name" value="IHF_beta"/>
    <property type="match status" value="1"/>
</dbReference>
<dbReference type="InterPro" id="IPR000119">
    <property type="entry name" value="Hist_DNA-bd"/>
</dbReference>
<dbReference type="InterPro" id="IPR020816">
    <property type="entry name" value="Histone-like_DNA-bd_CS"/>
</dbReference>
<dbReference type="InterPro" id="IPR010992">
    <property type="entry name" value="IHF-like_DNA-bd_dom_sf"/>
</dbReference>
<dbReference type="InterPro" id="IPR005685">
    <property type="entry name" value="IHF_beta"/>
</dbReference>
<dbReference type="NCBIfam" id="TIGR00988">
    <property type="entry name" value="hip"/>
    <property type="match status" value="1"/>
</dbReference>
<dbReference type="NCBIfam" id="NF001222">
    <property type="entry name" value="PRK00199.1"/>
    <property type="match status" value="1"/>
</dbReference>
<dbReference type="PANTHER" id="PTHR33175">
    <property type="entry name" value="DNA-BINDING PROTEIN HU"/>
    <property type="match status" value="1"/>
</dbReference>
<dbReference type="PANTHER" id="PTHR33175:SF5">
    <property type="entry name" value="INTEGRATION HOST FACTOR SUBUNIT BETA"/>
    <property type="match status" value="1"/>
</dbReference>
<dbReference type="Pfam" id="PF00216">
    <property type="entry name" value="Bac_DNA_binding"/>
    <property type="match status" value="1"/>
</dbReference>
<dbReference type="PRINTS" id="PR01727">
    <property type="entry name" value="DNABINDINGHU"/>
</dbReference>
<dbReference type="SMART" id="SM00411">
    <property type="entry name" value="BHL"/>
    <property type="match status" value="1"/>
</dbReference>
<dbReference type="SUPFAM" id="SSF47729">
    <property type="entry name" value="IHF-like DNA-binding proteins"/>
    <property type="match status" value="1"/>
</dbReference>
<dbReference type="PROSITE" id="PS00045">
    <property type="entry name" value="HISTONE_LIKE"/>
    <property type="match status" value="1"/>
</dbReference>
<comment type="function">
    <text evidence="1">This protein is one of the two subunits of integration host factor, a specific DNA-binding protein that functions in genetic recombination as well as in transcriptional and translational control.</text>
</comment>
<comment type="subunit">
    <text evidence="1">Heterodimer of an alpha and a beta chain.</text>
</comment>
<comment type="similarity">
    <text evidence="2">Belongs to the bacterial histone-like protein family.</text>
</comment>
<name>IHFB_NEIMA</name>
<sequence>MTKSELMVRLAEVFAAKNGTHLLAKDVEYSVKVLVDTMTRSLARGQRIEIRGFGSFDLNHRPARIGRNPKTGERVEVPEKHVPHFKPGKELRERVDLALKENAN</sequence>
<reference key="1">
    <citation type="journal article" date="2000" name="Nature">
        <title>Complete DNA sequence of a serogroup A strain of Neisseria meningitidis Z2491.</title>
        <authorList>
            <person name="Parkhill J."/>
            <person name="Achtman M."/>
            <person name="James K.D."/>
            <person name="Bentley S.D."/>
            <person name="Churcher C.M."/>
            <person name="Klee S.R."/>
            <person name="Morelli G."/>
            <person name="Basham D."/>
            <person name="Brown D."/>
            <person name="Chillingworth T."/>
            <person name="Davies R.M."/>
            <person name="Davis P."/>
            <person name="Devlin K."/>
            <person name="Feltwell T."/>
            <person name="Hamlin N."/>
            <person name="Holroyd S."/>
            <person name="Jagels K."/>
            <person name="Leather S."/>
            <person name="Moule S."/>
            <person name="Mungall K.L."/>
            <person name="Quail M.A."/>
            <person name="Rajandream M.A."/>
            <person name="Rutherford K.M."/>
            <person name="Simmonds M."/>
            <person name="Skelton J."/>
            <person name="Whitehead S."/>
            <person name="Spratt B.G."/>
            <person name="Barrell B.G."/>
        </authorList>
    </citation>
    <scope>NUCLEOTIDE SEQUENCE [LARGE SCALE GENOMIC DNA]</scope>
    <source>
        <strain>DSM 15465 / Z2491</strain>
    </source>
</reference>
<gene>
    <name type="primary">ihfB</name>
    <name type="synonym">himD</name>
    <name type="synonym">hip</name>
    <name type="ordered locus">NMA1516</name>
</gene>
<feature type="chain" id="PRO_0000105055" description="Integration host factor subunit beta">
    <location>
        <begin position="1"/>
        <end position="104"/>
    </location>
</feature>
<keyword id="KW-0233">DNA recombination</keyword>
<keyword id="KW-0238">DNA-binding</keyword>
<keyword id="KW-0804">Transcription</keyword>
<keyword id="KW-0805">Transcription regulation</keyword>
<keyword id="KW-0810">Translation regulation</keyword>
<protein>
    <recommendedName>
        <fullName>Integration host factor subunit beta</fullName>
        <shortName>IHF-beta</shortName>
    </recommendedName>
</protein>
<accession>P0A0U1</accession>
<accession>A1ISA7</accession>
<accession>Q9JRH3</accession>
<evidence type="ECO:0000250" key="1"/>
<evidence type="ECO:0000305" key="2"/>